<gene>
    <name evidence="1" type="primary">rutF</name>
    <name type="ordered locus">ECH74115_1244</name>
</gene>
<keyword id="KW-0285">Flavoprotein</keyword>
<keyword id="KW-0288">FMN</keyword>
<keyword id="KW-0520">NAD</keyword>
<keyword id="KW-0560">Oxidoreductase</keyword>
<name>RUTF_ECO5E</name>
<comment type="function">
    <text evidence="1">Catalyzes the reduction of FMN to FMNH2 which is used to reduce pyrimidine by RutA via the Rut pathway.</text>
</comment>
<comment type="catalytic activity">
    <reaction evidence="1">
        <text>FMNH2 + NAD(+) = FMN + NADH + 2 H(+)</text>
        <dbReference type="Rhea" id="RHEA:21620"/>
        <dbReference type="ChEBI" id="CHEBI:15378"/>
        <dbReference type="ChEBI" id="CHEBI:57540"/>
        <dbReference type="ChEBI" id="CHEBI:57618"/>
        <dbReference type="ChEBI" id="CHEBI:57945"/>
        <dbReference type="ChEBI" id="CHEBI:58210"/>
        <dbReference type="EC" id="1.5.1.42"/>
    </reaction>
</comment>
<comment type="induction">
    <text evidence="1">Up-regulated by the nitrogen regulatory protein C (NtrC also called GlnG) and repressed by RutR.</text>
</comment>
<comment type="similarity">
    <text evidence="1">Belongs to the non-flavoprotein flavin reductase family. RutF subfamily.</text>
</comment>
<dbReference type="EC" id="1.5.1.42" evidence="1"/>
<dbReference type="EMBL" id="CP001164">
    <property type="protein sequence ID" value="ACI36661.1"/>
    <property type="molecule type" value="Genomic_DNA"/>
</dbReference>
<dbReference type="RefSeq" id="WP_001028088.1">
    <property type="nucleotide sequence ID" value="NC_011353.1"/>
</dbReference>
<dbReference type="SMR" id="B5YU49"/>
<dbReference type="KEGG" id="ecf:ECH74115_1244"/>
<dbReference type="HOGENOM" id="CLU_059021_2_2_6"/>
<dbReference type="GO" id="GO:0010181">
    <property type="term" value="F:FMN binding"/>
    <property type="evidence" value="ECO:0007669"/>
    <property type="project" value="InterPro"/>
</dbReference>
<dbReference type="GO" id="GO:0052874">
    <property type="term" value="F:FMN reductase (NADH) activity"/>
    <property type="evidence" value="ECO:0007669"/>
    <property type="project" value="UniProtKB-EC"/>
</dbReference>
<dbReference type="GO" id="GO:0008752">
    <property type="term" value="F:FMN reductase [NAD(P)H] activity"/>
    <property type="evidence" value="ECO:0007669"/>
    <property type="project" value="InterPro"/>
</dbReference>
<dbReference type="GO" id="GO:0042602">
    <property type="term" value="F:riboflavin reductase (NADPH) activity"/>
    <property type="evidence" value="ECO:0007669"/>
    <property type="project" value="UniProtKB-UniRule"/>
</dbReference>
<dbReference type="GO" id="GO:0019740">
    <property type="term" value="P:nitrogen utilization"/>
    <property type="evidence" value="ECO:0007669"/>
    <property type="project" value="UniProtKB-UniRule"/>
</dbReference>
<dbReference type="GO" id="GO:0006212">
    <property type="term" value="P:uracil catabolic process"/>
    <property type="evidence" value="ECO:0007669"/>
    <property type="project" value="UniProtKB-UniRule"/>
</dbReference>
<dbReference type="FunFam" id="2.30.110.10:FF:000002">
    <property type="entry name" value="FMN reductase (NADH) RutF"/>
    <property type="match status" value="1"/>
</dbReference>
<dbReference type="Gene3D" id="2.30.110.10">
    <property type="entry name" value="Electron Transport, Fmn-binding Protein, Chain A"/>
    <property type="match status" value="1"/>
</dbReference>
<dbReference type="HAMAP" id="MF_00833">
    <property type="entry name" value="RutF"/>
    <property type="match status" value="1"/>
</dbReference>
<dbReference type="InterPro" id="IPR002563">
    <property type="entry name" value="Flavin_Rdtase-like_dom"/>
</dbReference>
<dbReference type="InterPro" id="IPR050268">
    <property type="entry name" value="NADH-dep_flavin_reductase"/>
</dbReference>
<dbReference type="InterPro" id="IPR019917">
    <property type="entry name" value="RutF"/>
</dbReference>
<dbReference type="InterPro" id="IPR012349">
    <property type="entry name" value="Split_barrel_FMN-bd"/>
</dbReference>
<dbReference type="NCBIfam" id="TIGR03615">
    <property type="entry name" value="RutF"/>
    <property type="match status" value="1"/>
</dbReference>
<dbReference type="PANTHER" id="PTHR30466">
    <property type="entry name" value="FLAVIN REDUCTASE"/>
    <property type="match status" value="1"/>
</dbReference>
<dbReference type="PANTHER" id="PTHR30466:SF1">
    <property type="entry name" value="FMN REDUCTASE (NADH) RUTF"/>
    <property type="match status" value="1"/>
</dbReference>
<dbReference type="Pfam" id="PF01613">
    <property type="entry name" value="Flavin_Reduct"/>
    <property type="match status" value="1"/>
</dbReference>
<dbReference type="SMART" id="SM00903">
    <property type="entry name" value="Flavin_Reduct"/>
    <property type="match status" value="1"/>
</dbReference>
<dbReference type="SUPFAM" id="SSF50475">
    <property type="entry name" value="FMN-binding split barrel"/>
    <property type="match status" value="1"/>
</dbReference>
<feature type="chain" id="PRO_0000403013" description="FMN reductase (NADH) RutF">
    <location>
        <begin position="1"/>
        <end position="164"/>
    </location>
</feature>
<reference key="1">
    <citation type="journal article" date="2011" name="Proc. Natl. Acad. Sci. U.S.A.">
        <title>Genomic anatomy of Escherichia coli O157:H7 outbreaks.</title>
        <authorList>
            <person name="Eppinger M."/>
            <person name="Mammel M.K."/>
            <person name="Leclerc J.E."/>
            <person name="Ravel J."/>
            <person name="Cebula T.A."/>
        </authorList>
    </citation>
    <scope>NUCLEOTIDE SEQUENCE [LARGE SCALE GENOMIC DNA]</scope>
    <source>
        <strain>EC4115 / EHEC</strain>
    </source>
</reference>
<accession>B5YU49</accession>
<evidence type="ECO:0000255" key="1">
    <source>
        <dbReference type="HAMAP-Rule" id="MF_00833"/>
    </source>
</evidence>
<sequence length="164" mass="17760">MNIVDQQTFRDAMSCMGAAVNIITTDGPAGRAGFTASAVCSVTDTPPTLLVCLNRGASVWPVFNENRTLCVNTLSAGQEPLSNLFGGKTPMEHRFAAARWQNGVTGCPQLEEALVSFDCRISQVVSVGTHDILFCAIEAIHRHATPYGLVWFDRSYHALMRPAC</sequence>
<organism>
    <name type="scientific">Escherichia coli O157:H7 (strain EC4115 / EHEC)</name>
    <dbReference type="NCBI Taxonomy" id="444450"/>
    <lineage>
        <taxon>Bacteria</taxon>
        <taxon>Pseudomonadati</taxon>
        <taxon>Pseudomonadota</taxon>
        <taxon>Gammaproteobacteria</taxon>
        <taxon>Enterobacterales</taxon>
        <taxon>Enterobacteriaceae</taxon>
        <taxon>Escherichia</taxon>
    </lineage>
</organism>
<protein>
    <recommendedName>
        <fullName evidence="1">FMN reductase (NADH) RutF</fullName>
        <ecNumber evidence="1">1.5.1.42</ecNumber>
    </recommendedName>
    <alternativeName>
        <fullName evidence="1">FMN reductase</fullName>
    </alternativeName>
    <alternativeName>
        <fullName evidence="1">NADH-flavin reductase RutF</fullName>
    </alternativeName>
    <alternativeName>
        <fullName evidence="1">NADH:flavin oxidoreductase</fullName>
    </alternativeName>
</protein>
<proteinExistence type="inferred from homology"/>